<reference key="1">
    <citation type="journal article" date="2004" name="Nat. Biotechnol.">
        <title>The genome sequence of the extreme thermophile Thermus thermophilus.</title>
        <authorList>
            <person name="Henne A."/>
            <person name="Brueggemann H."/>
            <person name="Raasch C."/>
            <person name="Wiezer A."/>
            <person name="Hartsch T."/>
            <person name="Liesegang H."/>
            <person name="Johann A."/>
            <person name="Lienard T."/>
            <person name="Gohl O."/>
            <person name="Martinez-Arias R."/>
            <person name="Jacobi C."/>
            <person name="Starkuviene V."/>
            <person name="Schlenczeck S."/>
            <person name="Dencker S."/>
            <person name="Huber R."/>
            <person name="Klenk H.-P."/>
            <person name="Kramer W."/>
            <person name="Merkl R."/>
            <person name="Gottschalk G."/>
            <person name="Fritz H.-J."/>
        </authorList>
    </citation>
    <scope>NUCLEOTIDE SEQUENCE [LARGE SCALE GENOMIC DNA]</scope>
    <source>
        <strain>ATCC BAA-163 / DSM 7039 / HB27</strain>
    </source>
</reference>
<sequence>MLPETMPVCPVRGSVIYPTMVMPIDAGRPISIRAIDEALARDRVLLIVSQRDKEVETPRPSDLFEVGTACNILKMRKNPDGSVQVLVQAFARVRVREWLDLGDHLEARGEVLADEPGEPILVKALVREVKDKFQALLKEGKYLAPEVAQFILNLEDPSQLADYVAFHMDFRLEDKQKVLETANVAERLRAVLVLLEAELALIETQRRIQQQVKEEIDRNQREYFLREQMKAIQRELHGEEGEQEVEEFRRKLEALDLPPVVRQEVERELNRFARMHPDSAEASVIRTYLDWIVNLPWNTRTEDNLDLERAKEILERDHYGLEKVKDRVLEYLAVRKLKAERAKRGEIPPDEVNKGPILLFVGPPGVGKTSIAKSIAEALGRKYVRVSLGGVRDESDIRGHRRTYIGAMPGRIIQGLRQAGTKNPVFLLDEVDKLGISYQGDPAAALLEVLDPAQNKEFVDHYLGVPFDLSEVMFICTANFPQNIPAPLYDRMEPIEFTSYTEQEKLEIAKRYLLPRQLKENGLEPEQVVVTEAALTRLITHYTREAGVRQLEREIGALLRKAARRILEEGKKRVRITEKDLEAYLGPPRFLPETEAREPQVGVATGMYYTPVGGDIMFVEVSVMPGKGNLILTGQLGDVMKESARAALSYAKKNALRFGIPLEKFDKSDIHIHVPAGAIPKEGPSAGVALVSALVSALTEVPVRHDIAMTGEITLTGRVLPIGGVKEKVLGARRAGIREVILPKLNEPDLADIPKPLRQNMTFHFVEHLDQVLDLALVGGLKALEERGRRSRSARRKKELVAHA</sequence>
<comment type="function">
    <text evidence="1">ATP-dependent serine protease that mediates the selective degradation of mutant and abnormal proteins as well as certain short-lived regulatory proteins. Required for cellular homeostasis and for survival from DNA damage and developmental changes induced by stress. Degrades polypeptides processively to yield small peptide fragments that are 5 to 10 amino acids long. Binds to DNA in a double-stranded, site-specific manner.</text>
</comment>
<comment type="catalytic activity">
    <reaction evidence="1">
        <text>Hydrolysis of proteins in presence of ATP.</text>
        <dbReference type="EC" id="3.4.21.53"/>
    </reaction>
</comment>
<comment type="subunit">
    <text evidence="1">Homohexamer. Organized in a ring with a central cavity.</text>
</comment>
<comment type="subcellular location">
    <subcellularLocation>
        <location evidence="1">Cytoplasm</location>
    </subcellularLocation>
</comment>
<comment type="induction">
    <text evidence="1">By heat shock.</text>
</comment>
<comment type="similarity">
    <text evidence="1">Belongs to the peptidase S16 family.</text>
</comment>
<gene>
    <name evidence="1" type="primary">lon2</name>
    <name type="ordered locus">TT_C0746</name>
</gene>
<name>LON2_THET2</name>
<protein>
    <recommendedName>
        <fullName evidence="1">Lon protease 2</fullName>
        <ecNumber evidence="1">3.4.21.53</ecNumber>
    </recommendedName>
    <alternativeName>
        <fullName evidence="1">ATP-dependent protease La 2</fullName>
    </alternativeName>
</protein>
<dbReference type="EC" id="3.4.21.53" evidence="1"/>
<dbReference type="EMBL" id="AE017221">
    <property type="protein sequence ID" value="AAS81092.1"/>
    <property type="molecule type" value="Genomic_DNA"/>
</dbReference>
<dbReference type="RefSeq" id="WP_011173183.1">
    <property type="nucleotide sequence ID" value="NC_005835.1"/>
</dbReference>
<dbReference type="SMR" id="Q72JM6"/>
<dbReference type="MEROPS" id="S16.001"/>
<dbReference type="KEGG" id="tth:TT_C0746"/>
<dbReference type="eggNOG" id="COG0466">
    <property type="taxonomic scope" value="Bacteria"/>
</dbReference>
<dbReference type="HOGENOM" id="CLU_004109_4_3_0"/>
<dbReference type="OrthoDB" id="9803599at2"/>
<dbReference type="Proteomes" id="UP000000592">
    <property type="component" value="Chromosome"/>
</dbReference>
<dbReference type="GO" id="GO:0005737">
    <property type="term" value="C:cytoplasm"/>
    <property type="evidence" value="ECO:0007669"/>
    <property type="project" value="UniProtKB-SubCell"/>
</dbReference>
<dbReference type="GO" id="GO:0005524">
    <property type="term" value="F:ATP binding"/>
    <property type="evidence" value="ECO:0007669"/>
    <property type="project" value="UniProtKB-UniRule"/>
</dbReference>
<dbReference type="GO" id="GO:0016887">
    <property type="term" value="F:ATP hydrolysis activity"/>
    <property type="evidence" value="ECO:0007669"/>
    <property type="project" value="UniProtKB-UniRule"/>
</dbReference>
<dbReference type="GO" id="GO:0004176">
    <property type="term" value="F:ATP-dependent peptidase activity"/>
    <property type="evidence" value="ECO:0007669"/>
    <property type="project" value="UniProtKB-UniRule"/>
</dbReference>
<dbReference type="GO" id="GO:0043565">
    <property type="term" value="F:sequence-specific DNA binding"/>
    <property type="evidence" value="ECO:0007669"/>
    <property type="project" value="UniProtKB-UniRule"/>
</dbReference>
<dbReference type="GO" id="GO:0004252">
    <property type="term" value="F:serine-type endopeptidase activity"/>
    <property type="evidence" value="ECO:0007669"/>
    <property type="project" value="UniProtKB-UniRule"/>
</dbReference>
<dbReference type="GO" id="GO:0034605">
    <property type="term" value="P:cellular response to heat"/>
    <property type="evidence" value="ECO:0007669"/>
    <property type="project" value="UniProtKB-UniRule"/>
</dbReference>
<dbReference type="GO" id="GO:0006515">
    <property type="term" value="P:protein quality control for misfolded or incompletely synthesized proteins"/>
    <property type="evidence" value="ECO:0007669"/>
    <property type="project" value="UniProtKB-UniRule"/>
</dbReference>
<dbReference type="CDD" id="cd19500">
    <property type="entry name" value="RecA-like_Lon"/>
    <property type="match status" value="1"/>
</dbReference>
<dbReference type="FunFam" id="1.20.5.5270:FF:000002">
    <property type="entry name" value="Lon protease homolog"/>
    <property type="match status" value="1"/>
</dbReference>
<dbReference type="FunFam" id="3.40.50.300:FF:000382">
    <property type="entry name" value="Lon protease homolog 2, peroxisomal"/>
    <property type="match status" value="1"/>
</dbReference>
<dbReference type="Gene3D" id="1.10.8.60">
    <property type="match status" value="1"/>
</dbReference>
<dbReference type="Gene3D" id="1.20.5.5270">
    <property type="match status" value="1"/>
</dbReference>
<dbReference type="Gene3D" id="1.20.58.1480">
    <property type="match status" value="1"/>
</dbReference>
<dbReference type="Gene3D" id="3.30.230.10">
    <property type="match status" value="1"/>
</dbReference>
<dbReference type="Gene3D" id="2.30.130.40">
    <property type="entry name" value="LON domain-like"/>
    <property type="match status" value="1"/>
</dbReference>
<dbReference type="Gene3D" id="3.40.50.300">
    <property type="entry name" value="P-loop containing nucleotide triphosphate hydrolases"/>
    <property type="match status" value="1"/>
</dbReference>
<dbReference type="HAMAP" id="MF_01973">
    <property type="entry name" value="lon_bact"/>
    <property type="match status" value="1"/>
</dbReference>
<dbReference type="InterPro" id="IPR003593">
    <property type="entry name" value="AAA+_ATPase"/>
</dbReference>
<dbReference type="InterPro" id="IPR003959">
    <property type="entry name" value="ATPase_AAA_core"/>
</dbReference>
<dbReference type="InterPro" id="IPR027543">
    <property type="entry name" value="Lon_bac"/>
</dbReference>
<dbReference type="InterPro" id="IPR004815">
    <property type="entry name" value="Lon_bac/euk-typ"/>
</dbReference>
<dbReference type="InterPro" id="IPR054594">
    <property type="entry name" value="Lon_lid"/>
</dbReference>
<dbReference type="InterPro" id="IPR008269">
    <property type="entry name" value="Lon_proteolytic"/>
</dbReference>
<dbReference type="InterPro" id="IPR027065">
    <property type="entry name" value="Lon_Prtase"/>
</dbReference>
<dbReference type="InterPro" id="IPR003111">
    <property type="entry name" value="Lon_prtase_N"/>
</dbReference>
<dbReference type="InterPro" id="IPR046336">
    <property type="entry name" value="Lon_prtase_N_sf"/>
</dbReference>
<dbReference type="InterPro" id="IPR027417">
    <property type="entry name" value="P-loop_NTPase"/>
</dbReference>
<dbReference type="InterPro" id="IPR015947">
    <property type="entry name" value="PUA-like_sf"/>
</dbReference>
<dbReference type="InterPro" id="IPR020568">
    <property type="entry name" value="Ribosomal_Su5_D2-typ_SF"/>
</dbReference>
<dbReference type="InterPro" id="IPR014721">
    <property type="entry name" value="Ribsml_uS5_D2-typ_fold_subgr"/>
</dbReference>
<dbReference type="NCBIfam" id="TIGR00763">
    <property type="entry name" value="lon"/>
    <property type="match status" value="1"/>
</dbReference>
<dbReference type="PANTHER" id="PTHR10046">
    <property type="entry name" value="ATP DEPENDENT LON PROTEASE FAMILY MEMBER"/>
    <property type="match status" value="1"/>
</dbReference>
<dbReference type="Pfam" id="PF00004">
    <property type="entry name" value="AAA"/>
    <property type="match status" value="1"/>
</dbReference>
<dbReference type="Pfam" id="PF05362">
    <property type="entry name" value="Lon_C"/>
    <property type="match status" value="1"/>
</dbReference>
<dbReference type="Pfam" id="PF22667">
    <property type="entry name" value="Lon_lid"/>
    <property type="match status" value="1"/>
</dbReference>
<dbReference type="Pfam" id="PF02190">
    <property type="entry name" value="LON_substr_bdg"/>
    <property type="match status" value="1"/>
</dbReference>
<dbReference type="PIRSF" id="PIRSF001174">
    <property type="entry name" value="Lon_proteas"/>
    <property type="match status" value="1"/>
</dbReference>
<dbReference type="PRINTS" id="PR00830">
    <property type="entry name" value="ENDOLAPTASE"/>
</dbReference>
<dbReference type="SMART" id="SM00382">
    <property type="entry name" value="AAA"/>
    <property type="match status" value="1"/>
</dbReference>
<dbReference type="SMART" id="SM00464">
    <property type="entry name" value="LON"/>
    <property type="match status" value="1"/>
</dbReference>
<dbReference type="SUPFAM" id="SSF52540">
    <property type="entry name" value="P-loop containing nucleoside triphosphate hydrolases"/>
    <property type="match status" value="1"/>
</dbReference>
<dbReference type="SUPFAM" id="SSF88697">
    <property type="entry name" value="PUA domain-like"/>
    <property type="match status" value="1"/>
</dbReference>
<dbReference type="SUPFAM" id="SSF54211">
    <property type="entry name" value="Ribosomal protein S5 domain 2-like"/>
    <property type="match status" value="1"/>
</dbReference>
<dbReference type="PROSITE" id="PS51787">
    <property type="entry name" value="LON_N"/>
    <property type="match status" value="1"/>
</dbReference>
<dbReference type="PROSITE" id="PS51786">
    <property type="entry name" value="LON_PROTEOLYTIC"/>
    <property type="match status" value="1"/>
</dbReference>
<organism>
    <name type="scientific">Thermus thermophilus (strain ATCC BAA-163 / DSM 7039 / HB27)</name>
    <dbReference type="NCBI Taxonomy" id="262724"/>
    <lineage>
        <taxon>Bacteria</taxon>
        <taxon>Thermotogati</taxon>
        <taxon>Deinococcota</taxon>
        <taxon>Deinococci</taxon>
        <taxon>Thermales</taxon>
        <taxon>Thermaceae</taxon>
        <taxon>Thermus</taxon>
    </lineage>
</organism>
<accession>Q72JM6</accession>
<evidence type="ECO:0000255" key="1">
    <source>
        <dbReference type="HAMAP-Rule" id="MF_01973"/>
    </source>
</evidence>
<evidence type="ECO:0000255" key="2">
    <source>
        <dbReference type="PROSITE-ProRule" id="PRU01122"/>
    </source>
</evidence>
<evidence type="ECO:0000255" key="3">
    <source>
        <dbReference type="PROSITE-ProRule" id="PRU01123"/>
    </source>
</evidence>
<feature type="chain" id="PRO_0000396610" description="Lon protease 2">
    <location>
        <begin position="1"/>
        <end position="804"/>
    </location>
</feature>
<feature type="domain" description="Lon N-terminal" evidence="3">
    <location>
        <begin position="6"/>
        <end position="199"/>
    </location>
</feature>
<feature type="domain" description="Lon proteolytic" evidence="2">
    <location>
        <begin position="598"/>
        <end position="779"/>
    </location>
</feature>
<feature type="active site" evidence="1">
    <location>
        <position position="685"/>
    </location>
</feature>
<feature type="active site" evidence="1">
    <location>
        <position position="728"/>
    </location>
</feature>
<feature type="binding site" evidence="1">
    <location>
        <begin position="362"/>
        <end position="369"/>
    </location>
    <ligand>
        <name>ATP</name>
        <dbReference type="ChEBI" id="CHEBI:30616"/>
    </ligand>
</feature>
<proteinExistence type="inferred from homology"/>
<keyword id="KW-0067">ATP-binding</keyword>
<keyword id="KW-0963">Cytoplasm</keyword>
<keyword id="KW-0378">Hydrolase</keyword>
<keyword id="KW-0547">Nucleotide-binding</keyword>
<keyword id="KW-0645">Protease</keyword>
<keyword id="KW-0720">Serine protease</keyword>
<keyword id="KW-0346">Stress response</keyword>